<accession>P0CB78</accession>
<accession>Q97RT8</accession>
<accession>Q9ZHA6</accession>
<keyword id="KW-0328">Glycosyltransferase</keyword>
<keyword id="KW-0460">Magnesium</keyword>
<keyword id="KW-0665">Pyrimidine biosynthesis</keyword>
<keyword id="KW-1185">Reference proteome</keyword>
<keyword id="KW-0808">Transferase</keyword>
<comment type="function">
    <text evidence="1">Catalyzes the transfer of a ribosyl phosphate group from 5-phosphoribose 1-diphosphate to orotate, leading to the formation of orotidine monophosphate (OMP).</text>
</comment>
<comment type="catalytic activity">
    <reaction evidence="1">
        <text>orotidine 5'-phosphate + diphosphate = orotate + 5-phospho-alpha-D-ribose 1-diphosphate</text>
        <dbReference type="Rhea" id="RHEA:10380"/>
        <dbReference type="ChEBI" id="CHEBI:30839"/>
        <dbReference type="ChEBI" id="CHEBI:33019"/>
        <dbReference type="ChEBI" id="CHEBI:57538"/>
        <dbReference type="ChEBI" id="CHEBI:58017"/>
        <dbReference type="EC" id="2.4.2.10"/>
    </reaction>
</comment>
<comment type="cofactor">
    <cofactor evidence="1">
        <name>Mg(2+)</name>
        <dbReference type="ChEBI" id="CHEBI:18420"/>
    </cofactor>
</comment>
<comment type="pathway">
    <text evidence="1">Pyrimidine metabolism; UMP biosynthesis via de novo pathway; UMP from orotate: step 1/2.</text>
</comment>
<comment type="subunit">
    <text evidence="1">Homodimer.</text>
</comment>
<comment type="interaction">
    <interactant intactId="EBI-2207897">
        <id>P0CB78</id>
    </interactant>
    <interactant intactId="EBI-2207053">
        <id>Q97SE5</id>
        <label>gatC</label>
    </interactant>
    <organismsDiffer>false</organismsDiffer>
    <experiments>2</experiments>
</comment>
<comment type="similarity">
    <text evidence="1">Belongs to the purine/pyrimidine phosphoribosyltransferase family. PyrE subfamily.</text>
</comment>
<organism>
    <name type="scientific">Streptococcus pneumoniae serotype 4 (strain ATCC BAA-334 / TIGR4)</name>
    <dbReference type="NCBI Taxonomy" id="170187"/>
    <lineage>
        <taxon>Bacteria</taxon>
        <taxon>Bacillati</taxon>
        <taxon>Bacillota</taxon>
        <taxon>Bacilli</taxon>
        <taxon>Lactobacillales</taxon>
        <taxon>Streptococcaceae</taxon>
        <taxon>Streptococcus</taxon>
    </lineage>
</organism>
<dbReference type="EC" id="2.4.2.10" evidence="1"/>
<dbReference type="EMBL" id="AE005672">
    <property type="protein sequence ID" value="AAK74845.1"/>
    <property type="molecule type" value="Genomic_DNA"/>
</dbReference>
<dbReference type="PIR" id="D95081">
    <property type="entry name" value="D95081"/>
</dbReference>
<dbReference type="RefSeq" id="WP_000170915.1">
    <property type="nucleotide sequence ID" value="NZ_CP155539.1"/>
</dbReference>
<dbReference type="SMR" id="P0CB78"/>
<dbReference type="IntAct" id="P0CB78">
    <property type="interactions" value="1"/>
</dbReference>
<dbReference type="PaxDb" id="170187-SP_0702"/>
<dbReference type="EnsemblBacteria" id="AAK74845">
    <property type="protein sequence ID" value="AAK74845"/>
    <property type="gene ID" value="SP_0702"/>
</dbReference>
<dbReference type="GeneID" id="45653916"/>
<dbReference type="KEGG" id="spn:SP_0702"/>
<dbReference type="eggNOG" id="COG0461">
    <property type="taxonomic scope" value="Bacteria"/>
</dbReference>
<dbReference type="PhylomeDB" id="P0CB78"/>
<dbReference type="BioCyc" id="SPNE170187:G1FZB-720-MONOMER"/>
<dbReference type="UniPathway" id="UPA00070">
    <property type="reaction ID" value="UER00119"/>
</dbReference>
<dbReference type="Proteomes" id="UP000000585">
    <property type="component" value="Chromosome"/>
</dbReference>
<dbReference type="GO" id="GO:0000287">
    <property type="term" value="F:magnesium ion binding"/>
    <property type="evidence" value="ECO:0007669"/>
    <property type="project" value="UniProtKB-UniRule"/>
</dbReference>
<dbReference type="GO" id="GO:0004588">
    <property type="term" value="F:orotate phosphoribosyltransferase activity"/>
    <property type="evidence" value="ECO:0007669"/>
    <property type="project" value="UniProtKB-UniRule"/>
</dbReference>
<dbReference type="GO" id="GO:0044205">
    <property type="term" value="P:'de novo' UMP biosynthetic process"/>
    <property type="evidence" value="ECO:0007669"/>
    <property type="project" value="UniProtKB-UniRule"/>
</dbReference>
<dbReference type="GO" id="GO:0019856">
    <property type="term" value="P:pyrimidine nucleobase biosynthetic process"/>
    <property type="evidence" value="ECO:0007669"/>
    <property type="project" value="TreeGrafter"/>
</dbReference>
<dbReference type="CDD" id="cd06223">
    <property type="entry name" value="PRTases_typeI"/>
    <property type="match status" value="1"/>
</dbReference>
<dbReference type="Gene3D" id="3.40.50.2020">
    <property type="match status" value="1"/>
</dbReference>
<dbReference type="HAMAP" id="MF_01208">
    <property type="entry name" value="PyrE"/>
    <property type="match status" value="1"/>
</dbReference>
<dbReference type="InterPro" id="IPR023031">
    <property type="entry name" value="OPRT"/>
</dbReference>
<dbReference type="InterPro" id="IPR004467">
    <property type="entry name" value="Or_phspho_trans_dom"/>
</dbReference>
<dbReference type="InterPro" id="IPR000836">
    <property type="entry name" value="PRibTrfase_dom"/>
</dbReference>
<dbReference type="InterPro" id="IPR029057">
    <property type="entry name" value="PRTase-like"/>
</dbReference>
<dbReference type="NCBIfam" id="TIGR00336">
    <property type="entry name" value="pyrE"/>
    <property type="match status" value="1"/>
</dbReference>
<dbReference type="PANTHER" id="PTHR19278">
    <property type="entry name" value="OROTATE PHOSPHORIBOSYLTRANSFERASE"/>
    <property type="match status" value="1"/>
</dbReference>
<dbReference type="PANTHER" id="PTHR19278:SF9">
    <property type="entry name" value="URIDINE 5'-MONOPHOSPHATE SYNTHASE"/>
    <property type="match status" value="1"/>
</dbReference>
<dbReference type="Pfam" id="PF00156">
    <property type="entry name" value="Pribosyltran"/>
    <property type="match status" value="1"/>
</dbReference>
<dbReference type="SUPFAM" id="SSF53271">
    <property type="entry name" value="PRTase-like"/>
    <property type="match status" value="1"/>
</dbReference>
<dbReference type="PROSITE" id="PS00103">
    <property type="entry name" value="PUR_PYR_PR_TRANSFER"/>
    <property type="match status" value="1"/>
</dbReference>
<protein>
    <recommendedName>
        <fullName evidence="1">Orotate phosphoribosyltransferase</fullName>
        <shortName evidence="1">OPRT</shortName>
        <shortName evidence="1">OPRTase</shortName>
        <ecNumber evidence="1">2.4.2.10</ecNumber>
    </recommendedName>
</protein>
<sequence length="210" mass="22841">MTLAKDIASHLLKIQAVYLKPEEPFTWASGIKSPIYTDNRVTLAYPETRTLIENGFVEAIKEAFPEVEVIAGTATAGIPHGAIIADKMDLPFAYIRSKPKDHGAGNQIEGRVAQGQKMVVVEDLISTGGSVLEAVAAAKREGADVLGVVAIFSYQLPKADKNFADAGVKLVTLSNYSELIHLAQEEGYITPEGLDLLKRFKEDQENWQEG</sequence>
<gene>
    <name evidence="1" type="primary">pyrE</name>
    <name type="ordered locus">SP_0702</name>
</gene>
<feature type="chain" id="PRO_0000110751" description="Orotate phosphoribosyltransferase">
    <location>
        <begin position="1"/>
        <end position="210"/>
    </location>
</feature>
<feature type="binding site" evidence="1">
    <location>
        <position position="96"/>
    </location>
    <ligand>
        <name>5-phospho-alpha-D-ribose 1-diphosphate</name>
        <dbReference type="ChEBI" id="CHEBI:58017"/>
        <note>ligand shared between dimeric partners</note>
    </ligand>
</feature>
<feature type="binding site" evidence="1">
    <location>
        <position position="100"/>
    </location>
    <ligand>
        <name>5-phospho-alpha-D-ribose 1-diphosphate</name>
        <dbReference type="ChEBI" id="CHEBI:58017"/>
        <note>ligand shared between dimeric partners</note>
    </ligand>
</feature>
<feature type="binding site" evidence="1">
    <location>
        <position position="102"/>
    </location>
    <ligand>
        <name>5-phospho-alpha-D-ribose 1-diphosphate</name>
        <dbReference type="ChEBI" id="CHEBI:58017"/>
        <note>ligand shared between dimeric partners</note>
    </ligand>
</feature>
<feature type="binding site" description="in other chain" evidence="1">
    <location>
        <begin position="122"/>
        <end position="130"/>
    </location>
    <ligand>
        <name>5-phospho-alpha-D-ribose 1-diphosphate</name>
        <dbReference type="ChEBI" id="CHEBI:58017"/>
        <note>ligand shared between dimeric partners</note>
    </ligand>
</feature>
<feature type="binding site" evidence="1">
    <location>
        <position position="126"/>
    </location>
    <ligand>
        <name>orotate</name>
        <dbReference type="ChEBI" id="CHEBI:30839"/>
    </ligand>
</feature>
<evidence type="ECO:0000255" key="1">
    <source>
        <dbReference type="HAMAP-Rule" id="MF_01208"/>
    </source>
</evidence>
<reference key="1">
    <citation type="journal article" date="2001" name="Science">
        <title>Complete genome sequence of a virulent isolate of Streptococcus pneumoniae.</title>
        <authorList>
            <person name="Tettelin H."/>
            <person name="Nelson K.E."/>
            <person name="Paulsen I.T."/>
            <person name="Eisen J.A."/>
            <person name="Read T.D."/>
            <person name="Peterson S.N."/>
            <person name="Heidelberg J.F."/>
            <person name="DeBoy R.T."/>
            <person name="Haft D.H."/>
            <person name="Dodson R.J."/>
            <person name="Durkin A.S."/>
            <person name="Gwinn M.L."/>
            <person name="Kolonay J.F."/>
            <person name="Nelson W.C."/>
            <person name="Peterson J.D."/>
            <person name="Umayam L.A."/>
            <person name="White O."/>
            <person name="Salzberg S.L."/>
            <person name="Lewis M.R."/>
            <person name="Radune D."/>
            <person name="Holtzapple E.K."/>
            <person name="Khouri H.M."/>
            <person name="Wolf A.M."/>
            <person name="Utterback T.R."/>
            <person name="Hansen C.L."/>
            <person name="McDonald L.A."/>
            <person name="Feldblyum T.V."/>
            <person name="Angiuoli S.V."/>
            <person name="Dickinson T."/>
            <person name="Hickey E.K."/>
            <person name="Holt I.E."/>
            <person name="Loftus B.J."/>
            <person name="Yang F."/>
            <person name="Smith H.O."/>
            <person name="Venter J.C."/>
            <person name="Dougherty B.A."/>
            <person name="Morrison D.A."/>
            <person name="Hollingshead S.K."/>
            <person name="Fraser C.M."/>
        </authorList>
    </citation>
    <scope>NUCLEOTIDE SEQUENCE [LARGE SCALE GENOMIC DNA]</scope>
    <source>
        <strain>ATCC BAA-334 / TIGR4</strain>
    </source>
</reference>
<name>PYRE_STRPN</name>
<proteinExistence type="evidence at protein level"/>